<gene>
    <name evidence="1" type="primary">ccsB</name>
    <name evidence="1" type="synonym">ccs1</name>
    <name type="ordered locus">NATL1_18591</name>
</gene>
<evidence type="ECO:0000255" key="1">
    <source>
        <dbReference type="HAMAP-Rule" id="MF_01392"/>
    </source>
</evidence>
<name>CCS1_PROM1</name>
<sequence>MKKISQVLNWLSSLKIAILLLLLIAISCAAGTLIPQQESNQFYYDNFNKNPFLGIINANILLLFEFDHVYTSFWFLFLLIWLGLALSVCSFRRQLPILKSALNWIDYKSPRQIAKLSVAQTIVTNNCSESLEKIKLNLKKQGWNVKETDGRIAARQGVIGRLGPILIHLGMILLMIGATYGSLNGKTIEKFLAPGRSIDLLNNNEEKGLTIELQKFQIERDPQGRAEQYKSIVNVIEPNGSNESKEISVNYPLRYKGLTLYQADWSLAAITIQIDNSPKLQIPIEPISELGEQVWGTVIPTNKDGKNQILLTVDSELGPVNIYDNDGTLLTKLSINKEEKVKGALINIINIIPSSGLLLKHDPGVPLVYLSFAIILIGGSLSIISTKKIWVLHENEKSMIYIGGLSNRNLSGLSKELPNLISFLEN</sequence>
<accession>A2C4K5</accession>
<keyword id="KW-0201">Cytochrome c-type biogenesis</keyword>
<keyword id="KW-0472">Membrane</keyword>
<keyword id="KW-0793">Thylakoid</keyword>
<keyword id="KW-0812">Transmembrane</keyword>
<keyword id="KW-1133">Transmembrane helix</keyword>
<feature type="chain" id="PRO_0000363623" description="Cytochrome c biogenesis protein CcsB">
    <location>
        <begin position="1"/>
        <end position="426"/>
    </location>
</feature>
<feature type="transmembrane region" description="Helical" evidence="1">
    <location>
        <begin position="14"/>
        <end position="34"/>
    </location>
</feature>
<feature type="transmembrane region" description="Helical" evidence="1">
    <location>
        <begin position="72"/>
        <end position="92"/>
    </location>
</feature>
<feature type="transmembrane region" description="Helical" evidence="1">
    <location>
        <begin position="162"/>
        <end position="182"/>
    </location>
</feature>
<proteinExistence type="inferred from homology"/>
<reference key="1">
    <citation type="journal article" date="2007" name="PLoS Genet.">
        <title>Patterns and implications of gene gain and loss in the evolution of Prochlorococcus.</title>
        <authorList>
            <person name="Kettler G.C."/>
            <person name="Martiny A.C."/>
            <person name="Huang K."/>
            <person name="Zucker J."/>
            <person name="Coleman M.L."/>
            <person name="Rodrigue S."/>
            <person name="Chen F."/>
            <person name="Lapidus A."/>
            <person name="Ferriera S."/>
            <person name="Johnson J."/>
            <person name="Steglich C."/>
            <person name="Church G.M."/>
            <person name="Richardson P."/>
            <person name="Chisholm S.W."/>
        </authorList>
    </citation>
    <scope>NUCLEOTIDE SEQUENCE [LARGE SCALE GENOMIC DNA]</scope>
    <source>
        <strain>NATL1A</strain>
    </source>
</reference>
<protein>
    <recommendedName>
        <fullName evidence="1">Cytochrome c biogenesis protein CcsB</fullName>
    </recommendedName>
</protein>
<comment type="function">
    <text evidence="1">Required during biogenesis of c-type cytochromes (cytochrome c6 and cytochrome f) at the step of heme attachment.</text>
</comment>
<comment type="subunit">
    <text evidence="1">May interact with CcsA.</text>
</comment>
<comment type="subcellular location">
    <subcellularLocation>
        <location evidence="1">Cellular thylakoid membrane</location>
        <topology evidence="1">Multi-pass membrane protein</topology>
    </subcellularLocation>
</comment>
<comment type="similarity">
    <text evidence="1">Belongs to the Ccs1/CcsB family.</text>
</comment>
<dbReference type="EMBL" id="CP000553">
    <property type="protein sequence ID" value="ABM76415.1"/>
    <property type="molecule type" value="Genomic_DNA"/>
</dbReference>
<dbReference type="RefSeq" id="WP_011824397.1">
    <property type="nucleotide sequence ID" value="NC_008819.1"/>
</dbReference>
<dbReference type="KEGG" id="pme:NATL1_18591"/>
<dbReference type="eggNOG" id="COG1333">
    <property type="taxonomic scope" value="Bacteria"/>
</dbReference>
<dbReference type="HOGENOM" id="CLU_034630_0_0_3"/>
<dbReference type="Proteomes" id="UP000002592">
    <property type="component" value="Chromosome"/>
</dbReference>
<dbReference type="GO" id="GO:0031676">
    <property type="term" value="C:plasma membrane-derived thylakoid membrane"/>
    <property type="evidence" value="ECO:0007669"/>
    <property type="project" value="UniProtKB-SubCell"/>
</dbReference>
<dbReference type="GO" id="GO:0017004">
    <property type="term" value="P:cytochrome complex assembly"/>
    <property type="evidence" value="ECO:0007669"/>
    <property type="project" value="UniProtKB-UniRule"/>
</dbReference>
<dbReference type="HAMAP" id="MF_01392">
    <property type="entry name" value="CytC_Ccs1"/>
    <property type="match status" value="1"/>
</dbReference>
<dbReference type="InterPro" id="IPR023494">
    <property type="entry name" value="Cyt_c_bgen_Ccs1/CcsB/ResB"/>
</dbReference>
<dbReference type="InterPro" id="IPR007816">
    <property type="entry name" value="ResB-like_domain"/>
</dbReference>
<dbReference type="PANTHER" id="PTHR31566">
    <property type="entry name" value="CYTOCHROME C BIOGENESIS PROTEIN CCS1, CHLOROPLASTIC"/>
    <property type="match status" value="1"/>
</dbReference>
<dbReference type="PANTHER" id="PTHR31566:SF0">
    <property type="entry name" value="CYTOCHROME C BIOGENESIS PROTEIN CCS1, CHLOROPLASTIC"/>
    <property type="match status" value="1"/>
</dbReference>
<dbReference type="Pfam" id="PF05140">
    <property type="entry name" value="ResB"/>
    <property type="match status" value="2"/>
</dbReference>
<organism>
    <name type="scientific">Prochlorococcus marinus (strain NATL1A)</name>
    <dbReference type="NCBI Taxonomy" id="167555"/>
    <lineage>
        <taxon>Bacteria</taxon>
        <taxon>Bacillati</taxon>
        <taxon>Cyanobacteriota</taxon>
        <taxon>Cyanophyceae</taxon>
        <taxon>Synechococcales</taxon>
        <taxon>Prochlorococcaceae</taxon>
        <taxon>Prochlorococcus</taxon>
    </lineage>
</organism>